<dbReference type="EMBL" id="CP000051">
    <property type="protein sequence ID" value="AAX50903.1"/>
    <property type="molecule type" value="Genomic_DNA"/>
</dbReference>
<dbReference type="RefSeq" id="WP_010725281.1">
    <property type="nucleotide sequence ID" value="NC_007429.1"/>
</dbReference>
<dbReference type="SMR" id="Q3KL69"/>
<dbReference type="KEGG" id="cta:CTA_0679"/>
<dbReference type="HOGENOM" id="CLU_092403_0_1_0"/>
<dbReference type="Proteomes" id="UP000002532">
    <property type="component" value="Chromosome"/>
</dbReference>
<dbReference type="GO" id="GO:0015935">
    <property type="term" value="C:small ribosomal subunit"/>
    <property type="evidence" value="ECO:0007669"/>
    <property type="project" value="InterPro"/>
</dbReference>
<dbReference type="GO" id="GO:0019843">
    <property type="term" value="F:rRNA binding"/>
    <property type="evidence" value="ECO:0007669"/>
    <property type="project" value="UniProtKB-UniRule"/>
</dbReference>
<dbReference type="GO" id="GO:0003735">
    <property type="term" value="F:structural constituent of ribosome"/>
    <property type="evidence" value="ECO:0007669"/>
    <property type="project" value="InterPro"/>
</dbReference>
<dbReference type="GO" id="GO:0042274">
    <property type="term" value="P:ribosomal small subunit biogenesis"/>
    <property type="evidence" value="ECO:0007669"/>
    <property type="project" value="TreeGrafter"/>
</dbReference>
<dbReference type="GO" id="GO:0006412">
    <property type="term" value="P:translation"/>
    <property type="evidence" value="ECO:0007669"/>
    <property type="project" value="UniProtKB-UniRule"/>
</dbReference>
<dbReference type="CDD" id="cd00165">
    <property type="entry name" value="S4"/>
    <property type="match status" value="1"/>
</dbReference>
<dbReference type="FunFam" id="3.10.290.10:FF:000001">
    <property type="entry name" value="30S ribosomal protein S4"/>
    <property type="match status" value="1"/>
</dbReference>
<dbReference type="Gene3D" id="1.10.1050.10">
    <property type="entry name" value="Ribosomal Protein S4 Delta 41, Chain A, domain 1"/>
    <property type="match status" value="1"/>
</dbReference>
<dbReference type="Gene3D" id="3.10.290.10">
    <property type="entry name" value="RNA-binding S4 domain"/>
    <property type="match status" value="1"/>
</dbReference>
<dbReference type="HAMAP" id="MF_01306_B">
    <property type="entry name" value="Ribosomal_uS4_B"/>
    <property type="match status" value="1"/>
</dbReference>
<dbReference type="InterPro" id="IPR022801">
    <property type="entry name" value="Ribosomal_uS4"/>
</dbReference>
<dbReference type="InterPro" id="IPR005709">
    <property type="entry name" value="Ribosomal_uS4_bac-type"/>
</dbReference>
<dbReference type="InterPro" id="IPR001912">
    <property type="entry name" value="Ribosomal_uS4_N"/>
</dbReference>
<dbReference type="InterPro" id="IPR002942">
    <property type="entry name" value="S4_RNA-bd"/>
</dbReference>
<dbReference type="InterPro" id="IPR036986">
    <property type="entry name" value="S4_RNA-bd_sf"/>
</dbReference>
<dbReference type="NCBIfam" id="NF003717">
    <property type="entry name" value="PRK05327.1"/>
    <property type="match status" value="1"/>
</dbReference>
<dbReference type="NCBIfam" id="TIGR01017">
    <property type="entry name" value="rpsD_bact"/>
    <property type="match status" value="1"/>
</dbReference>
<dbReference type="PANTHER" id="PTHR11831">
    <property type="entry name" value="30S 40S RIBOSOMAL PROTEIN"/>
    <property type="match status" value="1"/>
</dbReference>
<dbReference type="PANTHER" id="PTHR11831:SF4">
    <property type="entry name" value="SMALL RIBOSOMAL SUBUNIT PROTEIN US4M"/>
    <property type="match status" value="1"/>
</dbReference>
<dbReference type="Pfam" id="PF00163">
    <property type="entry name" value="Ribosomal_S4"/>
    <property type="match status" value="1"/>
</dbReference>
<dbReference type="Pfam" id="PF01479">
    <property type="entry name" value="S4"/>
    <property type="match status" value="1"/>
</dbReference>
<dbReference type="SMART" id="SM01390">
    <property type="entry name" value="Ribosomal_S4"/>
    <property type="match status" value="1"/>
</dbReference>
<dbReference type="SMART" id="SM00363">
    <property type="entry name" value="S4"/>
    <property type="match status" value="1"/>
</dbReference>
<dbReference type="SUPFAM" id="SSF55174">
    <property type="entry name" value="Alpha-L RNA-binding motif"/>
    <property type="match status" value="1"/>
</dbReference>
<dbReference type="PROSITE" id="PS50889">
    <property type="entry name" value="S4"/>
    <property type="match status" value="1"/>
</dbReference>
<reference key="1">
    <citation type="journal article" date="2005" name="Infect. Immun.">
        <title>Comparative genomic analysis of Chlamydia trachomatis oculotropic and genitotropic strains.</title>
        <authorList>
            <person name="Carlson J.H."/>
            <person name="Porcella S.F."/>
            <person name="McClarty G."/>
            <person name="Caldwell H.D."/>
        </authorList>
    </citation>
    <scope>NUCLEOTIDE SEQUENCE [LARGE SCALE GENOMIC DNA]</scope>
    <source>
        <strain>ATCC VR-571B / DSM 19440 / HAR-13</strain>
    </source>
</reference>
<gene>
    <name evidence="1" type="primary">rpsD</name>
    <name type="ordered locus">CTA_0679</name>
</gene>
<protein>
    <recommendedName>
        <fullName evidence="1">Small ribosomal subunit protein uS4</fullName>
    </recommendedName>
    <alternativeName>
        <fullName evidence="3">30S ribosomal protein S4</fullName>
    </alternativeName>
</protein>
<name>RS4_CHLTA</name>
<evidence type="ECO:0000255" key="1">
    <source>
        <dbReference type="HAMAP-Rule" id="MF_01306"/>
    </source>
</evidence>
<evidence type="ECO:0000256" key="2">
    <source>
        <dbReference type="SAM" id="MobiDB-lite"/>
    </source>
</evidence>
<evidence type="ECO:0000305" key="3"/>
<organism>
    <name type="scientific">Chlamydia trachomatis serovar A (strain ATCC VR-571B / DSM 19440 / HAR-13)</name>
    <dbReference type="NCBI Taxonomy" id="315277"/>
    <lineage>
        <taxon>Bacteria</taxon>
        <taxon>Pseudomonadati</taxon>
        <taxon>Chlamydiota</taxon>
        <taxon>Chlamydiia</taxon>
        <taxon>Chlamydiales</taxon>
        <taxon>Chlamydiaceae</taxon>
        <taxon>Chlamydia/Chlamydophila group</taxon>
        <taxon>Chlamydia</taxon>
    </lineage>
</organism>
<sequence>MARYCGPKNRIARRFGANIFGRGRNPLLRKPNPPGQHGMQRKKKSDYGLQLEEKQKLKACYGMILEKQLVKAYKEVVNKQGNVAQMFLEKFECRLDNIVYRLGFAKTIFAAQQLVSHGHVLVNGKKVDRRSFFVRPGMQISLKEKSKRLAIVTESLENKDQSSLPAYLSLDKAAFKGELVVAPELDQIASQLPLPVNVSVICEFLSHRT</sequence>
<accession>Q3KL69</accession>
<proteinExistence type="inferred from homology"/>
<feature type="chain" id="PRO_0000228885" description="Small ribosomal subunit protein uS4">
    <location>
        <begin position="1"/>
        <end position="209"/>
    </location>
</feature>
<feature type="domain" description="S4 RNA-binding" evidence="1">
    <location>
        <begin position="93"/>
        <end position="154"/>
    </location>
</feature>
<feature type="region of interest" description="Disordered" evidence="2">
    <location>
        <begin position="22"/>
        <end position="45"/>
    </location>
</feature>
<comment type="function">
    <text evidence="1">One of the primary rRNA binding proteins, it binds directly to 16S rRNA where it nucleates assembly of the body of the 30S subunit.</text>
</comment>
<comment type="function">
    <text evidence="1">With S5 and S12 plays an important role in translational accuracy.</text>
</comment>
<comment type="subunit">
    <text evidence="1">Part of the 30S ribosomal subunit. Contacts protein S5. The interaction surface between S4 and S5 is involved in control of translational fidelity.</text>
</comment>
<comment type="similarity">
    <text evidence="1">Belongs to the universal ribosomal protein uS4 family.</text>
</comment>
<keyword id="KW-0687">Ribonucleoprotein</keyword>
<keyword id="KW-0689">Ribosomal protein</keyword>
<keyword id="KW-0694">RNA-binding</keyword>
<keyword id="KW-0699">rRNA-binding</keyword>